<accession>B2IEE1</accession>
<reference key="1">
    <citation type="journal article" date="2010" name="J. Bacteriol.">
        <title>Complete genome sequence of Beijerinckia indica subsp. indica.</title>
        <authorList>
            <person name="Tamas I."/>
            <person name="Dedysh S.N."/>
            <person name="Liesack W."/>
            <person name="Stott M.B."/>
            <person name="Alam M."/>
            <person name="Murrell J.C."/>
            <person name="Dunfield P.F."/>
        </authorList>
    </citation>
    <scope>NUCLEOTIDE SEQUENCE [LARGE SCALE GENOMIC DNA]</scope>
    <source>
        <strain>ATCC 9039 / DSM 1715 / NCIMB 8712</strain>
    </source>
</reference>
<keyword id="KW-0030">Aminoacyl-tRNA synthetase</keyword>
<keyword id="KW-0067">ATP-binding</keyword>
<keyword id="KW-0963">Cytoplasm</keyword>
<keyword id="KW-0436">Ligase</keyword>
<keyword id="KW-0479">Metal-binding</keyword>
<keyword id="KW-0547">Nucleotide-binding</keyword>
<keyword id="KW-0648">Protein biosynthesis</keyword>
<keyword id="KW-1185">Reference proteome</keyword>
<keyword id="KW-0862">Zinc</keyword>
<comment type="catalytic activity">
    <reaction evidence="1">
        <text>tRNA(Cys) + L-cysteine + ATP = L-cysteinyl-tRNA(Cys) + AMP + diphosphate</text>
        <dbReference type="Rhea" id="RHEA:17773"/>
        <dbReference type="Rhea" id="RHEA-COMP:9661"/>
        <dbReference type="Rhea" id="RHEA-COMP:9679"/>
        <dbReference type="ChEBI" id="CHEBI:30616"/>
        <dbReference type="ChEBI" id="CHEBI:33019"/>
        <dbReference type="ChEBI" id="CHEBI:35235"/>
        <dbReference type="ChEBI" id="CHEBI:78442"/>
        <dbReference type="ChEBI" id="CHEBI:78517"/>
        <dbReference type="ChEBI" id="CHEBI:456215"/>
        <dbReference type="EC" id="6.1.1.16"/>
    </reaction>
</comment>
<comment type="cofactor">
    <cofactor evidence="1">
        <name>Zn(2+)</name>
        <dbReference type="ChEBI" id="CHEBI:29105"/>
    </cofactor>
    <text evidence="1">Binds 1 zinc ion per subunit.</text>
</comment>
<comment type="subunit">
    <text evidence="1">Monomer.</text>
</comment>
<comment type="subcellular location">
    <subcellularLocation>
        <location evidence="1">Cytoplasm</location>
    </subcellularLocation>
</comment>
<comment type="similarity">
    <text evidence="1">Belongs to the class-I aminoacyl-tRNA synthetase family.</text>
</comment>
<sequence>MALQLYNTLTRQKDIFEPIDPANVRLYACGPTVYDFLHIGNGRMLIVFDLLFRVLRDLYGADHVRYVRNITDVDDKINARAAERGIDIRVLTDEMTAIFHEDAKALNCLPPTVEPRATEHMAEMIAIIEKLVANGHAYIAEGHVLFDVPSMPDYGKLSKRPLDDMIAGARVEVAPYKRSPTDFVLWKPAKPEEPGWESPWGRGRPGWHLECSAMSWKHLGEVFDIHGGGIDLVFPHHENEVAQTCSAFGHDVMANVWMHNGHLQVEGQKMSKSLGNFLTIRDVLKDWPGETVRFTMLKTHYRQPIDWTLSSLRESQRELDRWYPVARAFDQINPDNIPGIPSSFRDALQDDLNTPEAITILRRLYKDALETTDYAGVHLLLCGKLLGLFDQSLEKWKNWKPASFTVENVTFEDLIKEREEARAAKNWPKSDHLRDVLASYGIVLKDNKDGTTSWEAKR</sequence>
<protein>
    <recommendedName>
        <fullName evidence="1">Cysteine--tRNA ligase</fullName>
        <ecNumber evidence="1">6.1.1.16</ecNumber>
    </recommendedName>
    <alternativeName>
        <fullName evidence="1">Cysteinyl-tRNA synthetase</fullName>
        <shortName evidence="1">CysRS</shortName>
    </alternativeName>
</protein>
<name>SYC_BEII9</name>
<dbReference type="EC" id="6.1.1.16" evidence="1"/>
<dbReference type="EMBL" id="CP001016">
    <property type="protein sequence ID" value="ACB95539.1"/>
    <property type="molecule type" value="Genomic_DNA"/>
</dbReference>
<dbReference type="RefSeq" id="WP_012384896.1">
    <property type="nucleotide sequence ID" value="NC_010581.1"/>
</dbReference>
<dbReference type="SMR" id="B2IEE1"/>
<dbReference type="STRING" id="395963.Bind_1915"/>
<dbReference type="KEGG" id="bid:Bind_1915"/>
<dbReference type="eggNOG" id="COG0215">
    <property type="taxonomic scope" value="Bacteria"/>
</dbReference>
<dbReference type="HOGENOM" id="CLU_013528_0_1_5"/>
<dbReference type="OrthoDB" id="9815130at2"/>
<dbReference type="Proteomes" id="UP000001695">
    <property type="component" value="Chromosome"/>
</dbReference>
<dbReference type="GO" id="GO:0005829">
    <property type="term" value="C:cytosol"/>
    <property type="evidence" value="ECO:0007669"/>
    <property type="project" value="TreeGrafter"/>
</dbReference>
<dbReference type="GO" id="GO:0005524">
    <property type="term" value="F:ATP binding"/>
    <property type="evidence" value="ECO:0007669"/>
    <property type="project" value="UniProtKB-UniRule"/>
</dbReference>
<dbReference type="GO" id="GO:0004817">
    <property type="term" value="F:cysteine-tRNA ligase activity"/>
    <property type="evidence" value="ECO:0007669"/>
    <property type="project" value="UniProtKB-UniRule"/>
</dbReference>
<dbReference type="GO" id="GO:0008270">
    <property type="term" value="F:zinc ion binding"/>
    <property type="evidence" value="ECO:0007669"/>
    <property type="project" value="UniProtKB-UniRule"/>
</dbReference>
<dbReference type="GO" id="GO:0006423">
    <property type="term" value="P:cysteinyl-tRNA aminoacylation"/>
    <property type="evidence" value="ECO:0007669"/>
    <property type="project" value="UniProtKB-UniRule"/>
</dbReference>
<dbReference type="CDD" id="cd00672">
    <property type="entry name" value="CysRS_core"/>
    <property type="match status" value="1"/>
</dbReference>
<dbReference type="FunFam" id="3.40.50.620:FF:000009">
    <property type="entry name" value="Cysteine--tRNA ligase"/>
    <property type="match status" value="1"/>
</dbReference>
<dbReference type="Gene3D" id="1.20.120.1910">
    <property type="entry name" value="Cysteine-tRNA ligase, C-terminal anti-codon recognition domain"/>
    <property type="match status" value="1"/>
</dbReference>
<dbReference type="Gene3D" id="3.40.50.620">
    <property type="entry name" value="HUPs"/>
    <property type="match status" value="1"/>
</dbReference>
<dbReference type="HAMAP" id="MF_00041">
    <property type="entry name" value="Cys_tRNA_synth"/>
    <property type="match status" value="1"/>
</dbReference>
<dbReference type="InterPro" id="IPR015803">
    <property type="entry name" value="Cys-tRNA-ligase"/>
</dbReference>
<dbReference type="InterPro" id="IPR015273">
    <property type="entry name" value="Cys-tRNA-synt_Ia_DALR"/>
</dbReference>
<dbReference type="InterPro" id="IPR024909">
    <property type="entry name" value="Cys-tRNA/MSH_ligase"/>
</dbReference>
<dbReference type="InterPro" id="IPR056411">
    <property type="entry name" value="CysS_C"/>
</dbReference>
<dbReference type="InterPro" id="IPR014729">
    <property type="entry name" value="Rossmann-like_a/b/a_fold"/>
</dbReference>
<dbReference type="InterPro" id="IPR032678">
    <property type="entry name" value="tRNA-synt_1_cat_dom"/>
</dbReference>
<dbReference type="InterPro" id="IPR009080">
    <property type="entry name" value="tRNAsynth_Ia_anticodon-bd"/>
</dbReference>
<dbReference type="NCBIfam" id="TIGR00435">
    <property type="entry name" value="cysS"/>
    <property type="match status" value="1"/>
</dbReference>
<dbReference type="PANTHER" id="PTHR10890:SF3">
    <property type="entry name" value="CYSTEINE--TRNA LIGASE, CYTOPLASMIC"/>
    <property type="match status" value="1"/>
</dbReference>
<dbReference type="PANTHER" id="PTHR10890">
    <property type="entry name" value="CYSTEINYL-TRNA SYNTHETASE"/>
    <property type="match status" value="1"/>
</dbReference>
<dbReference type="Pfam" id="PF23493">
    <property type="entry name" value="CysS_C"/>
    <property type="match status" value="1"/>
</dbReference>
<dbReference type="Pfam" id="PF09190">
    <property type="entry name" value="DALR_2"/>
    <property type="match status" value="1"/>
</dbReference>
<dbReference type="Pfam" id="PF01406">
    <property type="entry name" value="tRNA-synt_1e"/>
    <property type="match status" value="1"/>
</dbReference>
<dbReference type="PRINTS" id="PR00983">
    <property type="entry name" value="TRNASYNTHCYS"/>
</dbReference>
<dbReference type="SMART" id="SM00840">
    <property type="entry name" value="DALR_2"/>
    <property type="match status" value="1"/>
</dbReference>
<dbReference type="SUPFAM" id="SSF47323">
    <property type="entry name" value="Anticodon-binding domain of a subclass of class I aminoacyl-tRNA synthetases"/>
    <property type="match status" value="1"/>
</dbReference>
<dbReference type="SUPFAM" id="SSF52374">
    <property type="entry name" value="Nucleotidylyl transferase"/>
    <property type="match status" value="1"/>
</dbReference>
<organism>
    <name type="scientific">Beijerinckia indica subsp. indica (strain ATCC 9039 / DSM 1715 / NCIMB 8712)</name>
    <dbReference type="NCBI Taxonomy" id="395963"/>
    <lineage>
        <taxon>Bacteria</taxon>
        <taxon>Pseudomonadati</taxon>
        <taxon>Pseudomonadota</taxon>
        <taxon>Alphaproteobacteria</taxon>
        <taxon>Hyphomicrobiales</taxon>
        <taxon>Beijerinckiaceae</taxon>
        <taxon>Beijerinckia</taxon>
    </lineage>
</organism>
<proteinExistence type="inferred from homology"/>
<gene>
    <name evidence="1" type="primary">cysS</name>
    <name type="ordered locus">Bind_1915</name>
</gene>
<feature type="chain" id="PRO_1000090818" description="Cysteine--tRNA ligase">
    <location>
        <begin position="1"/>
        <end position="458"/>
    </location>
</feature>
<feature type="short sequence motif" description="'HIGH' region">
    <location>
        <begin position="31"/>
        <end position="41"/>
    </location>
</feature>
<feature type="short sequence motif" description="'KMSKS' region">
    <location>
        <begin position="269"/>
        <end position="273"/>
    </location>
</feature>
<feature type="binding site" evidence="1">
    <location>
        <position position="29"/>
    </location>
    <ligand>
        <name>Zn(2+)</name>
        <dbReference type="ChEBI" id="CHEBI:29105"/>
    </ligand>
</feature>
<feature type="binding site" evidence="1">
    <location>
        <position position="211"/>
    </location>
    <ligand>
        <name>Zn(2+)</name>
        <dbReference type="ChEBI" id="CHEBI:29105"/>
    </ligand>
</feature>
<feature type="binding site" evidence="1">
    <location>
        <position position="236"/>
    </location>
    <ligand>
        <name>Zn(2+)</name>
        <dbReference type="ChEBI" id="CHEBI:29105"/>
    </ligand>
</feature>
<feature type="binding site" evidence="1">
    <location>
        <position position="240"/>
    </location>
    <ligand>
        <name>Zn(2+)</name>
        <dbReference type="ChEBI" id="CHEBI:29105"/>
    </ligand>
</feature>
<feature type="binding site" evidence="1">
    <location>
        <position position="272"/>
    </location>
    <ligand>
        <name>ATP</name>
        <dbReference type="ChEBI" id="CHEBI:30616"/>
    </ligand>
</feature>
<evidence type="ECO:0000255" key="1">
    <source>
        <dbReference type="HAMAP-Rule" id="MF_00041"/>
    </source>
</evidence>